<accession>Q64WB0</accession>
<organism>
    <name type="scientific">Bacteroides fragilis (strain YCH46)</name>
    <dbReference type="NCBI Taxonomy" id="295405"/>
    <lineage>
        <taxon>Bacteria</taxon>
        <taxon>Pseudomonadati</taxon>
        <taxon>Bacteroidota</taxon>
        <taxon>Bacteroidia</taxon>
        <taxon>Bacteroidales</taxon>
        <taxon>Bacteroidaceae</taxon>
        <taxon>Bacteroides</taxon>
    </lineage>
</organism>
<proteinExistence type="inferred from homology"/>
<gene>
    <name evidence="1" type="primary">queC</name>
    <name type="ordered locus">BF1465</name>
</gene>
<dbReference type="EC" id="6.3.4.20" evidence="1"/>
<dbReference type="EMBL" id="AP006841">
    <property type="protein sequence ID" value="BAD48216.1"/>
    <property type="status" value="ALT_INIT"/>
    <property type="molecule type" value="Genomic_DNA"/>
</dbReference>
<dbReference type="RefSeq" id="YP_098750.1">
    <property type="nucleotide sequence ID" value="NC_006347.1"/>
</dbReference>
<dbReference type="SMR" id="Q64WB0"/>
<dbReference type="STRING" id="295405.BF1465"/>
<dbReference type="KEGG" id="bfr:BF1465"/>
<dbReference type="PATRIC" id="fig|295405.11.peg.1429"/>
<dbReference type="HOGENOM" id="CLU_081854_0_0_10"/>
<dbReference type="OrthoDB" id="9789567at2"/>
<dbReference type="UniPathway" id="UPA00391"/>
<dbReference type="Proteomes" id="UP000002197">
    <property type="component" value="Chromosome"/>
</dbReference>
<dbReference type="GO" id="GO:0005524">
    <property type="term" value="F:ATP binding"/>
    <property type="evidence" value="ECO:0007669"/>
    <property type="project" value="UniProtKB-UniRule"/>
</dbReference>
<dbReference type="GO" id="GO:0016879">
    <property type="term" value="F:ligase activity, forming carbon-nitrogen bonds"/>
    <property type="evidence" value="ECO:0007669"/>
    <property type="project" value="UniProtKB-UniRule"/>
</dbReference>
<dbReference type="GO" id="GO:0008270">
    <property type="term" value="F:zinc ion binding"/>
    <property type="evidence" value="ECO:0007669"/>
    <property type="project" value="UniProtKB-UniRule"/>
</dbReference>
<dbReference type="GO" id="GO:0008616">
    <property type="term" value="P:queuosine biosynthetic process"/>
    <property type="evidence" value="ECO:0007669"/>
    <property type="project" value="UniProtKB-UniRule"/>
</dbReference>
<dbReference type="CDD" id="cd01995">
    <property type="entry name" value="QueC-like"/>
    <property type="match status" value="1"/>
</dbReference>
<dbReference type="FunFam" id="3.40.50.620:FF:000017">
    <property type="entry name" value="7-cyano-7-deazaguanine synthase"/>
    <property type="match status" value="1"/>
</dbReference>
<dbReference type="Gene3D" id="3.40.50.620">
    <property type="entry name" value="HUPs"/>
    <property type="match status" value="1"/>
</dbReference>
<dbReference type="HAMAP" id="MF_01633">
    <property type="entry name" value="QueC"/>
    <property type="match status" value="1"/>
</dbReference>
<dbReference type="InterPro" id="IPR018317">
    <property type="entry name" value="QueC"/>
</dbReference>
<dbReference type="InterPro" id="IPR014729">
    <property type="entry name" value="Rossmann-like_a/b/a_fold"/>
</dbReference>
<dbReference type="NCBIfam" id="TIGR00364">
    <property type="entry name" value="7-cyano-7-deazaguanine synthase QueC"/>
    <property type="match status" value="1"/>
</dbReference>
<dbReference type="PANTHER" id="PTHR42914">
    <property type="entry name" value="7-CYANO-7-DEAZAGUANINE SYNTHASE"/>
    <property type="match status" value="1"/>
</dbReference>
<dbReference type="PANTHER" id="PTHR42914:SF1">
    <property type="entry name" value="7-CYANO-7-DEAZAGUANINE SYNTHASE"/>
    <property type="match status" value="1"/>
</dbReference>
<dbReference type="Pfam" id="PF06508">
    <property type="entry name" value="QueC"/>
    <property type="match status" value="1"/>
</dbReference>
<dbReference type="PIRSF" id="PIRSF006293">
    <property type="entry name" value="ExsB"/>
    <property type="match status" value="1"/>
</dbReference>
<dbReference type="SUPFAM" id="SSF52402">
    <property type="entry name" value="Adenine nucleotide alpha hydrolases-like"/>
    <property type="match status" value="1"/>
</dbReference>
<comment type="function">
    <text evidence="1">Catalyzes the ATP-dependent conversion of 7-carboxy-7-deazaguanine (CDG) to 7-cyano-7-deazaguanine (preQ(0)).</text>
</comment>
<comment type="catalytic activity">
    <reaction evidence="1">
        <text>7-carboxy-7-deazaguanine + NH4(+) + ATP = 7-cyano-7-deazaguanine + ADP + phosphate + H2O + H(+)</text>
        <dbReference type="Rhea" id="RHEA:27982"/>
        <dbReference type="ChEBI" id="CHEBI:15377"/>
        <dbReference type="ChEBI" id="CHEBI:15378"/>
        <dbReference type="ChEBI" id="CHEBI:28938"/>
        <dbReference type="ChEBI" id="CHEBI:30616"/>
        <dbReference type="ChEBI" id="CHEBI:43474"/>
        <dbReference type="ChEBI" id="CHEBI:45075"/>
        <dbReference type="ChEBI" id="CHEBI:61036"/>
        <dbReference type="ChEBI" id="CHEBI:456216"/>
        <dbReference type="EC" id="6.3.4.20"/>
    </reaction>
</comment>
<comment type="cofactor">
    <cofactor evidence="1">
        <name>Zn(2+)</name>
        <dbReference type="ChEBI" id="CHEBI:29105"/>
    </cofactor>
    <text evidence="1">Binds 1 zinc ion per subunit.</text>
</comment>
<comment type="pathway">
    <text evidence="1">Purine metabolism; 7-cyano-7-deazaguanine biosynthesis.</text>
</comment>
<comment type="similarity">
    <text evidence="1">Belongs to the QueC family.</text>
</comment>
<comment type="sequence caution" evidence="2">
    <conflict type="erroneous initiation">
        <sequence resource="EMBL-CDS" id="BAD48216"/>
    </conflict>
</comment>
<evidence type="ECO:0000255" key="1">
    <source>
        <dbReference type="HAMAP-Rule" id="MF_01633"/>
    </source>
</evidence>
<evidence type="ECO:0000305" key="2"/>
<protein>
    <recommendedName>
        <fullName evidence="1">7-cyano-7-deazaguanine synthase</fullName>
        <ecNumber evidence="1">6.3.4.20</ecNumber>
    </recommendedName>
    <alternativeName>
        <fullName evidence="1">7-cyano-7-carbaguanine synthase</fullName>
    </alternativeName>
    <alternativeName>
        <fullName evidence="1">PreQ(0) synthase</fullName>
    </alternativeName>
    <alternativeName>
        <fullName evidence="1">Queuosine biosynthesis protein QueC</fullName>
    </alternativeName>
</protein>
<feature type="chain" id="PRO_0000246803" description="7-cyano-7-deazaguanine synthase">
    <location>
        <begin position="1"/>
        <end position="219"/>
    </location>
</feature>
<feature type="binding site" evidence="1">
    <location>
        <begin position="10"/>
        <end position="20"/>
    </location>
    <ligand>
        <name>ATP</name>
        <dbReference type="ChEBI" id="CHEBI:30616"/>
    </ligand>
</feature>
<feature type="binding site" evidence="1">
    <location>
        <position position="188"/>
    </location>
    <ligand>
        <name>Zn(2+)</name>
        <dbReference type="ChEBI" id="CHEBI:29105"/>
    </ligand>
</feature>
<feature type="binding site" evidence="1">
    <location>
        <position position="197"/>
    </location>
    <ligand>
        <name>Zn(2+)</name>
        <dbReference type="ChEBI" id="CHEBI:29105"/>
    </ligand>
</feature>
<feature type="binding site" evidence="1">
    <location>
        <position position="200"/>
    </location>
    <ligand>
        <name>Zn(2+)</name>
        <dbReference type="ChEBI" id="CHEBI:29105"/>
    </ligand>
</feature>
<feature type="binding site" evidence="1">
    <location>
        <position position="203"/>
    </location>
    <ligand>
        <name>Zn(2+)</name>
        <dbReference type="ChEBI" id="CHEBI:29105"/>
    </ligand>
</feature>
<keyword id="KW-0067">ATP-binding</keyword>
<keyword id="KW-0436">Ligase</keyword>
<keyword id="KW-0479">Metal-binding</keyword>
<keyword id="KW-0547">Nucleotide-binding</keyword>
<keyword id="KW-0671">Queuosine biosynthesis</keyword>
<keyword id="KW-0862">Zinc</keyword>
<name>QUEC_BACFR</name>
<reference key="1">
    <citation type="journal article" date="2004" name="Proc. Natl. Acad. Sci. U.S.A.">
        <title>Genomic analysis of Bacteroides fragilis reveals extensive DNA inversions regulating cell surface adaptation.</title>
        <authorList>
            <person name="Kuwahara T."/>
            <person name="Yamashita A."/>
            <person name="Hirakawa H."/>
            <person name="Nakayama H."/>
            <person name="Toh H."/>
            <person name="Okada N."/>
            <person name="Kuhara S."/>
            <person name="Hattori M."/>
            <person name="Hayashi T."/>
            <person name="Ohnishi Y."/>
        </authorList>
    </citation>
    <scope>NUCLEOTIDE SEQUENCE [LARGE SCALE GENOMIC DNA]</scope>
    <source>
        <strain>YCH46</strain>
    </source>
</reference>
<sequence length="219" mass="24407">MKNDSAVVLFSGGQDSTTCLFWAKKHFKKVYALSFLYGQKHAHEVELARGIAERAGVEFHVMDTSFIGSLGSNSLTDTSISMDEDKPKDSFPNTFVPGRNLFFLSIAAVFAREQGAFHLVTGVSQTDYSGYPDCRDSFIKSLNVTLNLAMDEQFVIHTPLMWIDKAETWALADELGVFDLVRNETLTCYNGIPADGCGHCPACKLRKQGLEEYLSKRNR</sequence>